<reference key="1">
    <citation type="journal article" date="1992" name="J. Mol. Evol.">
        <title>A comparison of evolutionary rates of the two major kinds of superoxide dismutase.</title>
        <authorList>
            <person name="Smith M.W."/>
            <person name="Doolittle R.F."/>
        </authorList>
    </citation>
    <scope>NUCLEOTIDE SEQUENCE [MRNA]</scope>
</reference>
<sequence length="144" mass="15307">VIIGDIMELHHKKHHATYTNNLNAAEEKLAAAHAEGDIGGMIALQPALKFNGGGFINHCIFWTNLSPQGGGVPEGDLADAINRDFGSFDSFKTTLTAATVAIQGSGWGWLGFDPKTHHLKIATCVNQDPLQATTGMVPLFGIDV</sequence>
<organism>
    <name type="scientific">Apostichopus californicus</name>
    <name type="common">California sea cucumber</name>
    <name type="synonym">Parastichopus californicus</name>
    <dbReference type="NCBI Taxonomy" id="2032702"/>
    <lineage>
        <taxon>Eukaryota</taxon>
        <taxon>Metazoa</taxon>
        <taxon>Echinodermata</taxon>
        <taxon>Eleutherozoa</taxon>
        <taxon>Echinozoa</taxon>
        <taxon>Holothuroidea</taxon>
        <taxon>Aspidochirotacea</taxon>
        <taxon>Aspidochirotida</taxon>
        <taxon>Stichopodidae</taxon>
        <taxon>Apostichopus</taxon>
    </lineage>
</organism>
<evidence type="ECO:0000250" key="1"/>
<evidence type="ECO:0000305" key="2"/>
<keyword id="KW-0464">Manganese</keyword>
<keyword id="KW-0479">Metal-binding</keyword>
<keyword id="KW-0496">Mitochondrion</keyword>
<keyword id="KW-0560">Oxidoreductase</keyword>
<proteinExistence type="evidence at transcript level"/>
<accession>P28766</accession>
<dbReference type="EC" id="1.15.1.1"/>
<dbReference type="EMBL" id="X64060">
    <property type="protein sequence ID" value="CAA45416.1"/>
    <property type="molecule type" value="mRNA"/>
</dbReference>
<dbReference type="PIR" id="S23655">
    <property type="entry name" value="S23655"/>
</dbReference>
<dbReference type="SMR" id="P28766"/>
<dbReference type="GO" id="GO:0005759">
    <property type="term" value="C:mitochondrial matrix"/>
    <property type="evidence" value="ECO:0007669"/>
    <property type="project" value="UniProtKB-SubCell"/>
</dbReference>
<dbReference type="GO" id="GO:0030145">
    <property type="term" value="F:manganese ion binding"/>
    <property type="evidence" value="ECO:0007669"/>
    <property type="project" value="TreeGrafter"/>
</dbReference>
<dbReference type="GO" id="GO:0004784">
    <property type="term" value="F:superoxide dismutase activity"/>
    <property type="evidence" value="ECO:0007669"/>
    <property type="project" value="UniProtKB-EC"/>
</dbReference>
<dbReference type="FunFam" id="1.10.287.990:FF:000001">
    <property type="entry name" value="Superoxide dismutase"/>
    <property type="match status" value="1"/>
</dbReference>
<dbReference type="Gene3D" id="1.10.287.990">
    <property type="entry name" value="Fe,Mn superoxide dismutase (SOD) domain"/>
    <property type="match status" value="1"/>
</dbReference>
<dbReference type="Gene3D" id="3.55.40.20">
    <property type="entry name" value="Iron/manganese superoxide dismutase, C-terminal domain"/>
    <property type="match status" value="1"/>
</dbReference>
<dbReference type="InterPro" id="IPR050265">
    <property type="entry name" value="Fe/Mn_Superoxide_Dismutase"/>
</dbReference>
<dbReference type="InterPro" id="IPR001189">
    <property type="entry name" value="Mn/Fe_SOD"/>
</dbReference>
<dbReference type="InterPro" id="IPR019832">
    <property type="entry name" value="Mn/Fe_SOD_C"/>
</dbReference>
<dbReference type="InterPro" id="IPR019831">
    <property type="entry name" value="Mn/Fe_SOD_N"/>
</dbReference>
<dbReference type="InterPro" id="IPR036324">
    <property type="entry name" value="Mn/Fe_SOD_N_sf"/>
</dbReference>
<dbReference type="InterPro" id="IPR036314">
    <property type="entry name" value="SOD_C_sf"/>
</dbReference>
<dbReference type="PANTHER" id="PTHR11404">
    <property type="entry name" value="SUPEROXIDE DISMUTASE 2"/>
    <property type="match status" value="1"/>
</dbReference>
<dbReference type="PANTHER" id="PTHR11404:SF6">
    <property type="entry name" value="SUPEROXIDE DISMUTASE [MN], MITOCHONDRIAL"/>
    <property type="match status" value="1"/>
</dbReference>
<dbReference type="Pfam" id="PF02777">
    <property type="entry name" value="Sod_Fe_C"/>
    <property type="match status" value="1"/>
</dbReference>
<dbReference type="Pfam" id="PF00081">
    <property type="entry name" value="Sod_Fe_N"/>
    <property type="match status" value="1"/>
</dbReference>
<dbReference type="PRINTS" id="PR01703">
    <property type="entry name" value="MNSODISMTASE"/>
</dbReference>
<dbReference type="SUPFAM" id="SSF54719">
    <property type="entry name" value="Fe,Mn superoxide dismutase (SOD), C-terminal domain"/>
    <property type="match status" value="1"/>
</dbReference>
<dbReference type="SUPFAM" id="SSF46609">
    <property type="entry name" value="Fe,Mn superoxide dismutase (SOD), N-terminal domain"/>
    <property type="match status" value="1"/>
</dbReference>
<protein>
    <recommendedName>
        <fullName>Superoxide dismutase [Mn], mitochondrial</fullName>
        <ecNumber>1.15.1.1</ecNumber>
    </recommendedName>
</protein>
<feature type="chain" id="PRO_0000159961" description="Superoxide dismutase [Mn], mitochondrial">
    <location>
        <begin position="1" status="less than"/>
        <end position="144" status="greater than"/>
    </location>
</feature>
<feature type="binding site" evidence="1">
    <location>
        <position position="10"/>
    </location>
    <ligand>
        <name>Mn(2+)</name>
        <dbReference type="ChEBI" id="CHEBI:29035"/>
    </ligand>
</feature>
<feature type="binding site" evidence="1">
    <location>
        <position position="58"/>
    </location>
    <ligand>
        <name>Mn(2+)</name>
        <dbReference type="ChEBI" id="CHEBI:29035"/>
    </ligand>
</feature>
<feature type="binding site" evidence="1">
    <location>
        <position position="143"/>
    </location>
    <ligand>
        <name>Mn(2+)</name>
        <dbReference type="ChEBI" id="CHEBI:29035"/>
    </ligand>
</feature>
<feature type="non-terminal residue">
    <location>
        <position position="1"/>
    </location>
</feature>
<feature type="non-terminal residue">
    <location>
        <position position="144"/>
    </location>
</feature>
<comment type="function">
    <text>Destroys superoxide anion radicals which are normally produced within the cells and which are toxic to biological systems.</text>
</comment>
<comment type="catalytic activity">
    <reaction>
        <text>2 superoxide + 2 H(+) = H2O2 + O2</text>
        <dbReference type="Rhea" id="RHEA:20696"/>
        <dbReference type="ChEBI" id="CHEBI:15378"/>
        <dbReference type="ChEBI" id="CHEBI:15379"/>
        <dbReference type="ChEBI" id="CHEBI:16240"/>
        <dbReference type="ChEBI" id="CHEBI:18421"/>
        <dbReference type="EC" id="1.15.1.1"/>
    </reaction>
</comment>
<comment type="cofactor">
    <cofactor evidence="1">
        <name>Mn(2+)</name>
        <dbReference type="ChEBI" id="CHEBI:29035"/>
    </cofactor>
    <text evidence="1">Binds 1 Mn(2+) ion per subunit.</text>
</comment>
<comment type="subunit">
    <text>Homotetramer.</text>
</comment>
<comment type="subcellular location">
    <subcellularLocation>
        <location>Mitochondrion matrix</location>
    </subcellularLocation>
</comment>
<comment type="similarity">
    <text evidence="2">Belongs to the iron/manganese superoxide dismutase family.</text>
</comment>
<name>SODM_APOCL</name>